<reference key="1">
    <citation type="journal article" date="2009" name="BMC Genomics">
        <title>Genome evolution driven by host adaptations results in a more virulent and antimicrobial-resistant Streptococcus pneumoniae serotype 14.</title>
        <authorList>
            <person name="Ding F."/>
            <person name="Tang P."/>
            <person name="Hsu M.-H."/>
            <person name="Cui P."/>
            <person name="Hu S."/>
            <person name="Yu J."/>
            <person name="Chiu C.-H."/>
        </authorList>
    </citation>
    <scope>NUCLEOTIDE SEQUENCE [LARGE SCALE GENOMIC DNA]</scope>
    <source>
        <strain>CGSP14</strain>
    </source>
</reference>
<name>Y367_STRPS</name>
<feature type="chain" id="PRO_0000382551" description="UPF0398 protein SPCG_0367">
    <location>
        <begin position="1"/>
        <end position="175"/>
    </location>
</feature>
<evidence type="ECO:0000255" key="1">
    <source>
        <dbReference type="HAMAP-Rule" id="MF_01575"/>
    </source>
</evidence>
<evidence type="ECO:0000305" key="2"/>
<organism>
    <name type="scientific">Streptococcus pneumoniae (strain CGSP14)</name>
    <dbReference type="NCBI Taxonomy" id="516950"/>
    <lineage>
        <taxon>Bacteria</taxon>
        <taxon>Bacillati</taxon>
        <taxon>Bacillota</taxon>
        <taxon>Bacilli</taxon>
        <taxon>Lactobacillales</taxon>
        <taxon>Streptococcaceae</taxon>
        <taxon>Streptococcus</taxon>
    </lineage>
</organism>
<accession>B2ILR3</accession>
<sequence>MATALVLGYSAFDLGLFSDKDPRLKLIKKAIRKDLEAMAADGVSWLVFTGSLGFEYWVLEVAQEMKTEYGFQLATIFAFETHGENWNEGNQMKLSRFKQVDFVKYAYPRYEHKGQLRDYQQFLLENTTSSYLFYDEENETKLAYFYQKMKNQEDYFIKRLTFDQLNELAENFSEN</sequence>
<proteinExistence type="inferred from homology"/>
<comment type="similarity">
    <text evidence="1">Belongs to the UPF0398 family.</text>
</comment>
<comment type="sequence caution" evidence="2">
    <conflict type="erroneous initiation">
        <sequence resource="EMBL-CDS" id="ACB89618"/>
    </conflict>
</comment>
<dbReference type="EMBL" id="CP001033">
    <property type="protein sequence ID" value="ACB89618.1"/>
    <property type="status" value="ALT_INIT"/>
    <property type="molecule type" value="Genomic_DNA"/>
</dbReference>
<dbReference type="RefSeq" id="WP_000179549.1">
    <property type="nucleotide sequence ID" value="NC_010582.1"/>
</dbReference>
<dbReference type="SMR" id="B2ILR3"/>
<dbReference type="KEGG" id="spw:SPCG_0367"/>
<dbReference type="HOGENOM" id="CLU_105319_0_0_9"/>
<dbReference type="Gene3D" id="3.40.50.450">
    <property type="match status" value="1"/>
</dbReference>
<dbReference type="HAMAP" id="MF_01575">
    <property type="entry name" value="UPF0398"/>
    <property type="match status" value="1"/>
</dbReference>
<dbReference type="InterPro" id="IPR010697">
    <property type="entry name" value="YspA"/>
</dbReference>
<dbReference type="NCBIfam" id="NF010181">
    <property type="entry name" value="PRK13660.1"/>
    <property type="match status" value="1"/>
</dbReference>
<dbReference type="PANTHER" id="PTHR38440:SF1">
    <property type="entry name" value="UPF0398 PROTEIN SPR0331"/>
    <property type="match status" value="1"/>
</dbReference>
<dbReference type="PANTHER" id="PTHR38440">
    <property type="entry name" value="UPF0398 PROTEIN YPSA"/>
    <property type="match status" value="1"/>
</dbReference>
<dbReference type="Pfam" id="PF06908">
    <property type="entry name" value="YpsA"/>
    <property type="match status" value="1"/>
</dbReference>
<dbReference type="PIRSF" id="PIRSF021290">
    <property type="entry name" value="DUF1273"/>
    <property type="match status" value="1"/>
</dbReference>
<dbReference type="SUPFAM" id="SSF102405">
    <property type="entry name" value="MCP/YpsA-like"/>
    <property type="match status" value="1"/>
</dbReference>
<protein>
    <recommendedName>
        <fullName evidence="1">UPF0398 protein SPCG_0367</fullName>
    </recommendedName>
</protein>
<gene>
    <name type="ordered locus">SPCG_0367</name>
</gene>